<reference key="1">
    <citation type="journal article" date="1998" name="Abstr. - Soc. Neurosci.">
        <title>A second gene for gonadotropin-releasing hormone is expressed in the rhesus macaque (Abstract #632.18).</title>
        <authorList>
            <person name="White R.B."/>
            <person name="Urbanski H.F."/>
            <person name="Fernald R.D."/>
        </authorList>
    </citation>
    <scope>NUCLEOTIDE SEQUENCE [MRNA]</scope>
</reference>
<reference key="2">
    <citation type="journal article" date="1998" name="Abstr. - Soc. Neurosci.">
        <title>cDNA of a second form of luteinizing hormone releasing, chicken LHRH-II, isolated from the non-human primate brain (Abstract #632.8).</title>
        <authorList>
            <person name="Abler L.A."/>
            <person name="Sherwood N.M."/>
            <person name="Grendell R.L."/>
            <person name="Golos T.G."/>
            <person name="Terasawa E."/>
        </authorList>
    </citation>
    <scope>NUCLEOTIDE SEQUENCE [MRNA] OF 1-107</scope>
</reference>
<dbReference type="EMBL" id="AF097356">
    <property type="protein sequence ID" value="AAD09106.1"/>
    <property type="molecule type" value="mRNA"/>
</dbReference>
<dbReference type="EMBL" id="AF104307">
    <property type="protein sequence ID" value="AAD13775.1"/>
    <property type="molecule type" value="mRNA"/>
</dbReference>
<dbReference type="RefSeq" id="NP_001029374.1">
    <property type="nucleotide sequence ID" value="NM_001034202.1"/>
</dbReference>
<dbReference type="RefSeq" id="XP_028682946.1">
    <property type="nucleotide sequence ID" value="XM_028827113.1"/>
</dbReference>
<dbReference type="FunCoup" id="O97655">
    <property type="interactions" value="510"/>
</dbReference>
<dbReference type="STRING" id="9544.ENSMMUP00000007749"/>
<dbReference type="PaxDb" id="9544-ENSMMUP00000007749"/>
<dbReference type="Ensembl" id="ENSMMUT00000008244.3">
    <property type="protein sequence ID" value="ENSMMUP00000007749.2"/>
    <property type="gene ID" value="ENSMMUG00000005890.3"/>
</dbReference>
<dbReference type="GeneID" id="619516"/>
<dbReference type="KEGG" id="mcc:619516"/>
<dbReference type="CTD" id="2797"/>
<dbReference type="VEuPathDB" id="HostDB:ENSMMUG00000005890"/>
<dbReference type="VGNC" id="VGNC:73103">
    <property type="gene designation" value="GNRH2"/>
</dbReference>
<dbReference type="eggNOG" id="KOG4691">
    <property type="taxonomic scope" value="Eukaryota"/>
</dbReference>
<dbReference type="GeneTree" id="ENSGT00390000005119"/>
<dbReference type="InParanoid" id="O97655"/>
<dbReference type="OMA" id="WEGRTMA"/>
<dbReference type="OrthoDB" id="8490433at2759"/>
<dbReference type="Proteomes" id="UP000006718">
    <property type="component" value="Chromosome 10"/>
</dbReference>
<dbReference type="Bgee" id="ENSMMUG00000005890">
    <property type="expression patterns" value="Expressed in ileum and 13 other cell types or tissues"/>
</dbReference>
<dbReference type="GO" id="GO:0005615">
    <property type="term" value="C:extracellular space"/>
    <property type="evidence" value="ECO:0000250"/>
    <property type="project" value="UniProtKB"/>
</dbReference>
<dbReference type="GO" id="GO:0005183">
    <property type="term" value="F:gonadotropin hormone-releasing hormone activity"/>
    <property type="evidence" value="ECO:0000318"/>
    <property type="project" value="GO_Central"/>
</dbReference>
<dbReference type="GO" id="GO:0031530">
    <property type="term" value="F:gonadotropin-releasing hormone receptor binding"/>
    <property type="evidence" value="ECO:0000318"/>
    <property type="project" value="GO_Central"/>
</dbReference>
<dbReference type="InterPro" id="IPR002012">
    <property type="entry name" value="GnRH"/>
</dbReference>
<dbReference type="InterPro" id="IPR019792">
    <property type="entry name" value="Gonadoliberin"/>
</dbReference>
<dbReference type="PANTHER" id="PTHR10522">
    <property type="entry name" value="GONADOLIBERIN"/>
    <property type="match status" value="1"/>
</dbReference>
<dbReference type="PANTHER" id="PTHR10522:SF6">
    <property type="entry name" value="PROGONADOLIBERIN-2"/>
    <property type="match status" value="1"/>
</dbReference>
<dbReference type="Pfam" id="PF00446">
    <property type="entry name" value="GnRH"/>
    <property type="match status" value="1"/>
</dbReference>
<dbReference type="PROSITE" id="PS00473">
    <property type="entry name" value="GNRH"/>
    <property type="match status" value="1"/>
</dbReference>
<comment type="function">
    <text evidence="1">Stimulates the secretion of gonadotropins; it stimulates the secretion of both luteinizing and follicle-stimulating hormones.</text>
</comment>
<comment type="subcellular location">
    <subcellularLocation>
        <location evidence="1">Secreted</location>
    </subcellularLocation>
</comment>
<comment type="similarity">
    <text evidence="5">Belongs to the GnRH family.</text>
</comment>
<protein>
    <recommendedName>
        <fullName>Progonadoliberin-2</fullName>
    </recommendedName>
    <alternativeName>
        <fullName>Progonadoliberin II</fullName>
    </alternativeName>
    <component>
        <recommendedName>
            <fullName>Gonadoliberin-2</fullName>
        </recommendedName>
        <alternativeName>
            <fullName>Gonadoliberin II</fullName>
        </alternativeName>
        <alternativeName>
            <fullName>Gonadotropin-releasing hormone II</fullName>
            <shortName>GnRH II</shortName>
        </alternativeName>
        <alternativeName>
            <fullName>Luliberin II</fullName>
        </alternativeName>
        <alternativeName>
            <fullName>Luteinizing hormone-releasing hormone II</fullName>
            <shortName>LH-RH II</shortName>
        </alternativeName>
    </component>
    <component>
        <recommendedName>
            <fullName>GnRH-associated peptide 2</fullName>
        </recommendedName>
        <alternativeName>
            <fullName>GnRH-associated peptide II</fullName>
        </alternativeName>
    </component>
</protein>
<proteinExistence type="inferred from homology"/>
<name>GON2_MACMU</name>
<feature type="signal peptide" evidence="3">
    <location>
        <begin position="1"/>
        <end position="24"/>
    </location>
</feature>
<feature type="chain" id="PRO_0000012459" description="Progonadoliberin-2">
    <location>
        <begin position="25"/>
        <end position="114"/>
    </location>
</feature>
<feature type="peptide" id="PRO_0000012460" description="Gonadoliberin-2">
    <location>
        <begin position="25"/>
        <end position="34"/>
    </location>
</feature>
<feature type="peptide" id="PRO_0000012461" description="GnRH-associated peptide 2">
    <location>
        <begin position="38"/>
        <end position="114"/>
    </location>
</feature>
<feature type="region of interest" description="Disordered" evidence="4">
    <location>
        <begin position="35"/>
        <end position="59"/>
    </location>
</feature>
<feature type="modified residue" description="Glycine amide" evidence="2">
    <location>
        <position position="34"/>
    </location>
</feature>
<feature type="sequence conflict" description="In Ref. 2; AAD13775." evidence="5" ref="2">
    <original>A</original>
    <variation>V</variation>
    <location>
        <position position="24"/>
    </location>
</feature>
<feature type="sequence conflict" description="In Ref. 2; AAD13775." evidence="5" ref="2">
    <original>L</original>
    <variation>I</variation>
    <location>
        <position position="97"/>
    </location>
</feature>
<feature type="sequence conflict" description="In Ref. 2." evidence="5" ref="2">
    <original>V</original>
    <variation>A</variation>
    <location>
        <position position="107"/>
    </location>
</feature>
<sequence length="114" mass="12533">MASSRRGLLLLLMLLTAHPGPSEAQHWSHGWYPGGKRALSSAQDPQNALRPPAGSPAQATYGLPSDALAHLEDSMPWEGRTMAWWSLRRKRYLAQTLLTAAREPRPVPPSSNKV</sequence>
<organism>
    <name type="scientific">Macaca mulatta</name>
    <name type="common">Rhesus macaque</name>
    <dbReference type="NCBI Taxonomy" id="9544"/>
    <lineage>
        <taxon>Eukaryota</taxon>
        <taxon>Metazoa</taxon>
        <taxon>Chordata</taxon>
        <taxon>Craniata</taxon>
        <taxon>Vertebrata</taxon>
        <taxon>Euteleostomi</taxon>
        <taxon>Mammalia</taxon>
        <taxon>Eutheria</taxon>
        <taxon>Euarchontoglires</taxon>
        <taxon>Primates</taxon>
        <taxon>Haplorrhini</taxon>
        <taxon>Catarrhini</taxon>
        <taxon>Cercopithecidae</taxon>
        <taxon>Cercopithecinae</taxon>
        <taxon>Macaca</taxon>
    </lineage>
</organism>
<evidence type="ECO:0000250" key="1"/>
<evidence type="ECO:0000250" key="2">
    <source>
        <dbReference type="UniProtKB" id="P01148"/>
    </source>
</evidence>
<evidence type="ECO:0000255" key="3"/>
<evidence type="ECO:0000256" key="4">
    <source>
        <dbReference type="SAM" id="MobiDB-lite"/>
    </source>
</evidence>
<evidence type="ECO:0000305" key="5"/>
<accession>O97655</accession>
<accession>Q9TSI3</accession>
<keyword id="KW-0027">Amidation</keyword>
<keyword id="KW-0165">Cleavage on pair of basic residues</keyword>
<keyword id="KW-0372">Hormone</keyword>
<keyword id="KW-1185">Reference proteome</keyword>
<keyword id="KW-0964">Secreted</keyword>
<keyword id="KW-0732">Signal</keyword>
<gene>
    <name type="primary">GNRH2</name>
</gene>